<feature type="chain" id="PRO_1000075025" description="5'-nucleotidase SurE">
    <location>
        <begin position="1"/>
        <end position="265"/>
    </location>
</feature>
<feature type="binding site" evidence="1">
    <location>
        <position position="8"/>
    </location>
    <ligand>
        <name>a divalent metal cation</name>
        <dbReference type="ChEBI" id="CHEBI:60240"/>
    </ligand>
</feature>
<feature type="binding site" evidence="1">
    <location>
        <position position="9"/>
    </location>
    <ligand>
        <name>a divalent metal cation</name>
        <dbReference type="ChEBI" id="CHEBI:60240"/>
    </ligand>
</feature>
<feature type="binding site" evidence="1">
    <location>
        <position position="39"/>
    </location>
    <ligand>
        <name>a divalent metal cation</name>
        <dbReference type="ChEBI" id="CHEBI:60240"/>
    </ligand>
</feature>
<feature type="binding site" evidence="1">
    <location>
        <position position="96"/>
    </location>
    <ligand>
        <name>a divalent metal cation</name>
        <dbReference type="ChEBI" id="CHEBI:60240"/>
    </ligand>
</feature>
<gene>
    <name evidence="1" type="primary">surE</name>
    <name type="ordered locus">DehaBAV1_0723</name>
</gene>
<reference key="1">
    <citation type="submission" date="2007-05" db="EMBL/GenBank/DDBJ databases">
        <title>Complete sequence of Dehalococcoides sp. BAV1.</title>
        <authorList>
            <consortium name="US DOE Joint Genome Institute"/>
            <person name="Copeland A."/>
            <person name="Lucas S."/>
            <person name="Lapidus A."/>
            <person name="Barry K."/>
            <person name="Detter J.C."/>
            <person name="Glavina del Rio T."/>
            <person name="Hammon N."/>
            <person name="Israni S."/>
            <person name="Pitluck S."/>
            <person name="Lowry S."/>
            <person name="Clum A."/>
            <person name="Schmutz J."/>
            <person name="Larimer F."/>
            <person name="Land M."/>
            <person name="Hauser L."/>
            <person name="Kyrpides N."/>
            <person name="Kim E."/>
            <person name="Ritalahti K.M."/>
            <person name="Loeffler F."/>
            <person name="Richardson P."/>
        </authorList>
    </citation>
    <scope>NUCLEOTIDE SEQUENCE [LARGE SCALE GENOMIC DNA]</scope>
    <source>
        <strain>ATCC BAA-2100 / JCM 16839 / KCTC 5957 / BAV1</strain>
    </source>
</reference>
<dbReference type="EC" id="3.1.3.5" evidence="1"/>
<dbReference type="EMBL" id="CP000688">
    <property type="protein sequence ID" value="ABQ17307.1"/>
    <property type="molecule type" value="Genomic_DNA"/>
</dbReference>
<dbReference type="SMR" id="A5FR64"/>
<dbReference type="KEGG" id="deb:DehaBAV1_0723"/>
<dbReference type="PATRIC" id="fig|216389.18.peg.772"/>
<dbReference type="HOGENOM" id="CLU_045192_1_3_0"/>
<dbReference type="GO" id="GO:0005737">
    <property type="term" value="C:cytoplasm"/>
    <property type="evidence" value="ECO:0007669"/>
    <property type="project" value="UniProtKB-SubCell"/>
</dbReference>
<dbReference type="GO" id="GO:0008253">
    <property type="term" value="F:5'-nucleotidase activity"/>
    <property type="evidence" value="ECO:0007669"/>
    <property type="project" value="UniProtKB-UniRule"/>
</dbReference>
<dbReference type="GO" id="GO:0046872">
    <property type="term" value="F:metal ion binding"/>
    <property type="evidence" value="ECO:0007669"/>
    <property type="project" value="UniProtKB-UniRule"/>
</dbReference>
<dbReference type="GO" id="GO:0000166">
    <property type="term" value="F:nucleotide binding"/>
    <property type="evidence" value="ECO:0007669"/>
    <property type="project" value="UniProtKB-KW"/>
</dbReference>
<dbReference type="Gene3D" id="3.40.1210.10">
    <property type="entry name" value="Survival protein SurE-like phosphatase/nucleotidase"/>
    <property type="match status" value="1"/>
</dbReference>
<dbReference type="HAMAP" id="MF_00060">
    <property type="entry name" value="SurE"/>
    <property type="match status" value="1"/>
</dbReference>
<dbReference type="InterPro" id="IPR030048">
    <property type="entry name" value="SurE"/>
</dbReference>
<dbReference type="InterPro" id="IPR002828">
    <property type="entry name" value="SurE-like_Pase/nucleotidase"/>
</dbReference>
<dbReference type="InterPro" id="IPR036523">
    <property type="entry name" value="SurE-like_sf"/>
</dbReference>
<dbReference type="NCBIfam" id="NF001490">
    <property type="entry name" value="PRK00346.1-4"/>
    <property type="match status" value="1"/>
</dbReference>
<dbReference type="NCBIfam" id="TIGR00087">
    <property type="entry name" value="surE"/>
    <property type="match status" value="1"/>
</dbReference>
<dbReference type="PANTHER" id="PTHR30457">
    <property type="entry name" value="5'-NUCLEOTIDASE SURE"/>
    <property type="match status" value="1"/>
</dbReference>
<dbReference type="PANTHER" id="PTHR30457:SF0">
    <property type="entry name" value="PHOSPHATASE, PUTATIVE (AFU_ORTHOLOGUE AFUA_4G01070)-RELATED"/>
    <property type="match status" value="1"/>
</dbReference>
<dbReference type="Pfam" id="PF01975">
    <property type="entry name" value="SurE"/>
    <property type="match status" value="1"/>
</dbReference>
<dbReference type="SUPFAM" id="SSF64167">
    <property type="entry name" value="SurE-like"/>
    <property type="match status" value="1"/>
</dbReference>
<protein>
    <recommendedName>
        <fullName evidence="1">5'-nucleotidase SurE</fullName>
        <ecNumber evidence="1">3.1.3.5</ecNumber>
    </recommendedName>
    <alternativeName>
        <fullName evidence="1">Nucleoside 5'-monophosphate phosphohydrolase</fullName>
    </alternativeName>
</protein>
<keyword id="KW-0963">Cytoplasm</keyword>
<keyword id="KW-0378">Hydrolase</keyword>
<keyword id="KW-0479">Metal-binding</keyword>
<keyword id="KW-0547">Nucleotide-binding</keyword>
<organism>
    <name type="scientific">Dehalococcoides mccartyi (strain ATCC BAA-2100 / JCM 16839 / KCTC 5957 / BAV1)</name>
    <dbReference type="NCBI Taxonomy" id="216389"/>
    <lineage>
        <taxon>Bacteria</taxon>
        <taxon>Bacillati</taxon>
        <taxon>Chloroflexota</taxon>
        <taxon>Dehalococcoidia</taxon>
        <taxon>Dehalococcoidales</taxon>
        <taxon>Dehalococcoidaceae</taxon>
        <taxon>Dehalococcoides</taxon>
    </lineage>
</organism>
<sequence>MRILVSNDDGIYSPGLWALVKRLKEVGEVIVVAPDREQSATGTQVTLRQPLRVQKTHPLIPGIEAYAVEGSPCDCVILGLAKLITEPVDLVVSGINHGLNLGDDVLISGTVGAALQGYLRNIPSIAVSIPVTMEEPENLDSAACITAEVSRRIQNGDITKNSFLNINIPDLPLSQIEELRVTPLAHKTHIETVEEGHDGRKRYFWLRRRQLSSADNKKTDIWAIENGYITISALHERLFQQPVFTLKDAETAGILAAARSCQDKI</sequence>
<evidence type="ECO:0000255" key="1">
    <source>
        <dbReference type="HAMAP-Rule" id="MF_00060"/>
    </source>
</evidence>
<name>SURE_DEHMB</name>
<comment type="function">
    <text evidence="1">Nucleotidase that shows phosphatase activity on nucleoside 5'-monophosphates.</text>
</comment>
<comment type="catalytic activity">
    <reaction evidence="1">
        <text>a ribonucleoside 5'-phosphate + H2O = a ribonucleoside + phosphate</text>
        <dbReference type="Rhea" id="RHEA:12484"/>
        <dbReference type="ChEBI" id="CHEBI:15377"/>
        <dbReference type="ChEBI" id="CHEBI:18254"/>
        <dbReference type="ChEBI" id="CHEBI:43474"/>
        <dbReference type="ChEBI" id="CHEBI:58043"/>
        <dbReference type="EC" id="3.1.3.5"/>
    </reaction>
</comment>
<comment type="cofactor">
    <cofactor evidence="1">
        <name>a divalent metal cation</name>
        <dbReference type="ChEBI" id="CHEBI:60240"/>
    </cofactor>
    <text evidence="1">Binds 1 divalent metal cation per subunit.</text>
</comment>
<comment type="subcellular location">
    <subcellularLocation>
        <location evidence="1">Cytoplasm</location>
    </subcellularLocation>
</comment>
<comment type="similarity">
    <text evidence="1">Belongs to the SurE nucleotidase family.</text>
</comment>
<proteinExistence type="inferred from homology"/>
<accession>A5FR64</accession>